<reference key="1">
    <citation type="journal article" date="2004" name="Plant Physiol.">
        <title>A comparison of rice chloroplast genomes.</title>
        <authorList>
            <person name="Tang J."/>
            <person name="Xia H."/>
            <person name="Cao M."/>
            <person name="Zhang X."/>
            <person name="Zeng W."/>
            <person name="Hu S."/>
            <person name="Tong W."/>
            <person name="Wang J."/>
            <person name="Wang J."/>
            <person name="Yu J."/>
            <person name="Yang H."/>
            <person name="Zhu L."/>
        </authorList>
    </citation>
    <scope>NUCLEOTIDE SEQUENCE [LARGE SCALE GENOMIC DNA]</scope>
    <source>
        <strain>cv. PA64s</strain>
    </source>
</reference>
<gene>
    <name evidence="1" type="primary">rps11</name>
    <name type="ORF">PA102</name>
</gene>
<protein>
    <recommendedName>
        <fullName evidence="1">Small ribosomal subunit protein uS11c</fullName>
    </recommendedName>
    <alternativeName>
        <fullName evidence="2">30S ribosomal protein S11, chloroplastic</fullName>
    </alternativeName>
</protein>
<sequence>MTKAIPKIGSRRKVRIGLRRNARFSLRKSARRITKGVIHVQASFNNTIITVTDPQGRVVFWSSAGTCGFKSSRKASPYAGQRTAVDAIRTVGLQRAEVMVKGAGSGRDAALRAIAKSGVRLSCIRDVTPMPHNGCRPPKKRRL</sequence>
<proteinExistence type="inferred from homology"/>
<comment type="subunit">
    <text evidence="1">Part of the 30S ribosomal subunit.</text>
</comment>
<comment type="subcellular location">
    <subcellularLocation>
        <location>Plastid</location>
        <location>Chloroplast</location>
    </subcellularLocation>
</comment>
<comment type="similarity">
    <text evidence="1">Belongs to the universal ribosomal protein uS11 family.</text>
</comment>
<name>RR11_ORYSA</name>
<geneLocation type="chloroplast"/>
<keyword id="KW-0150">Chloroplast</keyword>
<keyword id="KW-0934">Plastid</keyword>
<keyword id="KW-0687">Ribonucleoprotein</keyword>
<keyword id="KW-0689">Ribosomal protein</keyword>
<keyword id="KW-0694">RNA-binding</keyword>
<keyword id="KW-0699">rRNA-binding</keyword>
<accession>P0C462</accession>
<accession>P12096</accession>
<accession>Q6QXY9</accession>
<accession>Q6QY53</accession>
<organism>
    <name type="scientific">Oryza sativa</name>
    <name type="common">Rice</name>
    <dbReference type="NCBI Taxonomy" id="4530"/>
    <lineage>
        <taxon>Eukaryota</taxon>
        <taxon>Viridiplantae</taxon>
        <taxon>Streptophyta</taxon>
        <taxon>Embryophyta</taxon>
        <taxon>Tracheophyta</taxon>
        <taxon>Spermatophyta</taxon>
        <taxon>Magnoliopsida</taxon>
        <taxon>Liliopsida</taxon>
        <taxon>Poales</taxon>
        <taxon>Poaceae</taxon>
        <taxon>BOP clade</taxon>
        <taxon>Oryzoideae</taxon>
        <taxon>Oryzeae</taxon>
        <taxon>Oryzinae</taxon>
        <taxon>Oryza</taxon>
    </lineage>
</organism>
<feature type="chain" id="PRO_0000123315" description="Small ribosomal subunit protein uS11c">
    <location>
        <begin position="1"/>
        <end position="143"/>
    </location>
</feature>
<evidence type="ECO:0000255" key="1">
    <source>
        <dbReference type="HAMAP-Rule" id="MF_01310"/>
    </source>
</evidence>
<evidence type="ECO:0000305" key="2"/>
<dbReference type="EMBL" id="AY522331">
    <property type="protein sequence ID" value="AAS46205.1"/>
    <property type="molecule type" value="Genomic_DNA"/>
</dbReference>
<dbReference type="RefSeq" id="NP_039418.1">
    <property type="nucleotide sequence ID" value="NC_001320.1"/>
</dbReference>
<dbReference type="RefSeq" id="YP_009305336.1">
    <property type="nucleotide sequence ID" value="NC_031333.1"/>
</dbReference>
<dbReference type="SMR" id="P0C462"/>
<dbReference type="GeneID" id="29141404"/>
<dbReference type="GeneID" id="3131435"/>
<dbReference type="KEGG" id="osa:3131435"/>
<dbReference type="GO" id="GO:0009507">
    <property type="term" value="C:chloroplast"/>
    <property type="evidence" value="ECO:0007669"/>
    <property type="project" value="UniProtKB-SubCell"/>
</dbReference>
<dbReference type="GO" id="GO:0009536">
    <property type="term" value="C:plastid"/>
    <property type="evidence" value="ECO:0000305"/>
    <property type="project" value="Gramene"/>
</dbReference>
<dbReference type="GO" id="GO:1990904">
    <property type="term" value="C:ribonucleoprotein complex"/>
    <property type="evidence" value="ECO:0007669"/>
    <property type="project" value="UniProtKB-KW"/>
</dbReference>
<dbReference type="GO" id="GO:0005840">
    <property type="term" value="C:ribosome"/>
    <property type="evidence" value="ECO:0007669"/>
    <property type="project" value="UniProtKB-KW"/>
</dbReference>
<dbReference type="GO" id="GO:0019843">
    <property type="term" value="F:rRNA binding"/>
    <property type="evidence" value="ECO:0007669"/>
    <property type="project" value="UniProtKB-UniRule"/>
</dbReference>
<dbReference type="GO" id="GO:0003735">
    <property type="term" value="F:structural constituent of ribosome"/>
    <property type="evidence" value="ECO:0007669"/>
    <property type="project" value="InterPro"/>
</dbReference>
<dbReference type="GO" id="GO:0006412">
    <property type="term" value="P:translation"/>
    <property type="evidence" value="ECO:0007669"/>
    <property type="project" value="UniProtKB-UniRule"/>
</dbReference>
<dbReference type="FunFam" id="3.30.420.80:FF:000003">
    <property type="entry name" value="30S ribosomal protein S11, chloroplastic"/>
    <property type="match status" value="1"/>
</dbReference>
<dbReference type="Gene3D" id="3.30.420.80">
    <property type="entry name" value="Ribosomal protein S11"/>
    <property type="match status" value="1"/>
</dbReference>
<dbReference type="HAMAP" id="MF_01310">
    <property type="entry name" value="Ribosomal_uS11"/>
    <property type="match status" value="1"/>
</dbReference>
<dbReference type="InterPro" id="IPR001971">
    <property type="entry name" value="Ribosomal_uS11"/>
</dbReference>
<dbReference type="InterPro" id="IPR018102">
    <property type="entry name" value="Ribosomal_uS11_CS"/>
</dbReference>
<dbReference type="InterPro" id="IPR036967">
    <property type="entry name" value="Ribosomal_uS11_sf"/>
</dbReference>
<dbReference type="NCBIfam" id="NF003698">
    <property type="entry name" value="PRK05309.1"/>
    <property type="match status" value="1"/>
</dbReference>
<dbReference type="PANTHER" id="PTHR11759">
    <property type="entry name" value="40S RIBOSOMAL PROTEIN S14/30S RIBOSOMAL PROTEIN S11"/>
    <property type="match status" value="1"/>
</dbReference>
<dbReference type="Pfam" id="PF00411">
    <property type="entry name" value="Ribosomal_S11"/>
    <property type="match status" value="1"/>
</dbReference>
<dbReference type="PIRSF" id="PIRSF002131">
    <property type="entry name" value="Ribosomal_S11"/>
    <property type="match status" value="1"/>
</dbReference>
<dbReference type="SUPFAM" id="SSF53137">
    <property type="entry name" value="Translational machinery components"/>
    <property type="match status" value="1"/>
</dbReference>
<dbReference type="PROSITE" id="PS00054">
    <property type="entry name" value="RIBOSOMAL_S11"/>
    <property type="match status" value="1"/>
</dbReference>